<comment type="function">
    <text evidence="1">Catalyzes the circularization of gamma-N-acetyl-alpha,gamma-diaminobutyric acid (ADABA) to ectoine (1,4,5,6-tetrahydro-2-methyl-4-pyrimidine carboxylic acid), which is an excellent osmoprotectant.</text>
</comment>
<comment type="catalytic activity">
    <reaction evidence="1">
        <text>(2S)-4-acetamido-2-aminobutanoate = L-ectoine + H2O</text>
        <dbReference type="Rhea" id="RHEA:17281"/>
        <dbReference type="ChEBI" id="CHEBI:15377"/>
        <dbReference type="ChEBI" id="CHEBI:58515"/>
        <dbReference type="ChEBI" id="CHEBI:58929"/>
        <dbReference type="EC" id="4.2.1.108"/>
    </reaction>
</comment>
<comment type="pathway">
    <text evidence="1">Amine and polyamine biosynthesis; ectoine biosynthesis; L-ectoine from L-aspartate 4-semialdehyde: step 3/3.</text>
</comment>
<comment type="similarity">
    <text evidence="1">Belongs to the ectoine synthase family.</text>
</comment>
<organism>
    <name type="scientific">Mycobacteroides abscessus (strain ATCC 19977 / DSM 44196 / CCUG 20993 / CIP 104536 / JCM 13569 / NCTC 13031 / TMC 1543 / L948)</name>
    <name type="common">Mycobacterium abscessus</name>
    <dbReference type="NCBI Taxonomy" id="561007"/>
    <lineage>
        <taxon>Bacteria</taxon>
        <taxon>Bacillati</taxon>
        <taxon>Actinomycetota</taxon>
        <taxon>Actinomycetes</taxon>
        <taxon>Mycobacteriales</taxon>
        <taxon>Mycobacteriaceae</taxon>
        <taxon>Mycobacteroides</taxon>
        <taxon>Mycobacteroides abscessus</taxon>
    </lineage>
</organism>
<reference key="1">
    <citation type="journal article" date="2009" name="PLoS ONE">
        <title>Non mycobacterial virulence genes in the genome of the emerging pathogen Mycobacterium abscessus.</title>
        <authorList>
            <person name="Ripoll F."/>
            <person name="Pasek S."/>
            <person name="Schenowitz C."/>
            <person name="Dossat C."/>
            <person name="Barbe V."/>
            <person name="Rottman M."/>
            <person name="Macheras E."/>
            <person name="Heym B."/>
            <person name="Herrmann J.L."/>
            <person name="Daffe M."/>
            <person name="Brosch R."/>
            <person name="Risler J.L."/>
            <person name="Gaillard J.L."/>
        </authorList>
    </citation>
    <scope>NUCLEOTIDE SEQUENCE [LARGE SCALE GENOMIC DNA]</scope>
    <source>
        <strain>ATCC 19977 / DSM 44196 / CCUG 20993 / CIP 104536 / JCM 13569 / NCTC 13031 / TMC 1543 / L948</strain>
    </source>
</reference>
<feature type="chain" id="PRO_1000139970" description="L-ectoine synthase">
    <location>
        <begin position="1"/>
        <end position="130"/>
    </location>
</feature>
<sequence>MIVRTTQQITGTERDVSGDGWHSKRIVLADDGVGFSFHETTIDAGTVHVFHYQHHIEAVWLTAGTGTLTNLENGDVFTLGPGSMYLLDGNERHQLSADSEMRMMCVFNPPVTGREVHDESGAYPAAPALS</sequence>
<evidence type="ECO:0000255" key="1">
    <source>
        <dbReference type="HAMAP-Rule" id="MF_01255"/>
    </source>
</evidence>
<protein>
    <recommendedName>
        <fullName evidence="1">L-ectoine synthase</fullName>
        <ecNumber evidence="1">4.2.1.108</ecNumber>
    </recommendedName>
    <alternativeName>
        <fullName evidence="1">N-acetyldiaminobutyrate dehydratase</fullName>
    </alternativeName>
</protein>
<accession>B1MAS5</accession>
<dbReference type="EC" id="4.2.1.108" evidence="1"/>
<dbReference type="EMBL" id="CU458896">
    <property type="protein sequence ID" value="CAM62346.1"/>
    <property type="molecule type" value="Genomic_DNA"/>
</dbReference>
<dbReference type="RefSeq" id="WP_005086038.1">
    <property type="nucleotide sequence ID" value="NZ_MLCG01000006.1"/>
</dbReference>
<dbReference type="SMR" id="B1MAS5"/>
<dbReference type="GeneID" id="93379201"/>
<dbReference type="KEGG" id="mab:MAB_2265c"/>
<dbReference type="UniPathway" id="UPA00067">
    <property type="reaction ID" value="UER00123"/>
</dbReference>
<dbReference type="Proteomes" id="UP000007137">
    <property type="component" value="Chromosome"/>
</dbReference>
<dbReference type="GO" id="GO:0033990">
    <property type="term" value="F:ectoine synthase activity"/>
    <property type="evidence" value="ECO:0007669"/>
    <property type="project" value="UniProtKB-EC"/>
</dbReference>
<dbReference type="GO" id="GO:0019491">
    <property type="term" value="P:ectoine biosynthetic process"/>
    <property type="evidence" value="ECO:0007669"/>
    <property type="project" value="UniProtKB-UniRule"/>
</dbReference>
<dbReference type="CDD" id="cd06978">
    <property type="entry name" value="cupin_EctC"/>
    <property type="match status" value="1"/>
</dbReference>
<dbReference type="Gene3D" id="2.60.120.10">
    <property type="entry name" value="Jelly Rolls"/>
    <property type="match status" value="1"/>
</dbReference>
<dbReference type="HAMAP" id="MF_01255">
    <property type="entry name" value="Ectoine_synth"/>
    <property type="match status" value="1"/>
</dbReference>
<dbReference type="InterPro" id="IPR010462">
    <property type="entry name" value="Ectoine_synth"/>
</dbReference>
<dbReference type="InterPro" id="IPR014710">
    <property type="entry name" value="RmlC-like_jellyroll"/>
</dbReference>
<dbReference type="InterPro" id="IPR011051">
    <property type="entry name" value="RmlC_Cupin_sf"/>
</dbReference>
<dbReference type="NCBIfam" id="NF009806">
    <property type="entry name" value="PRK13290.1"/>
    <property type="match status" value="1"/>
</dbReference>
<dbReference type="PANTHER" id="PTHR39289">
    <property type="match status" value="1"/>
</dbReference>
<dbReference type="PANTHER" id="PTHR39289:SF1">
    <property type="entry name" value="L-ECTOINE SYNTHASE"/>
    <property type="match status" value="1"/>
</dbReference>
<dbReference type="Pfam" id="PF06339">
    <property type="entry name" value="Ectoine_synth"/>
    <property type="match status" value="1"/>
</dbReference>
<dbReference type="SUPFAM" id="SSF51182">
    <property type="entry name" value="RmlC-like cupins"/>
    <property type="match status" value="1"/>
</dbReference>
<name>ECTC_MYCA9</name>
<gene>
    <name evidence="1" type="primary">ectC</name>
    <name type="ordered locus">MAB_2265c</name>
</gene>
<keyword id="KW-0456">Lyase</keyword>
<keyword id="KW-1185">Reference proteome</keyword>
<proteinExistence type="inferred from homology"/>